<accession>Q11HB3</accession>
<feature type="chain" id="PRO_0000300345" description="DNA-directed RNA polymerase subunit beta">
    <location>
        <begin position="1"/>
        <end position="1379"/>
    </location>
</feature>
<reference key="1">
    <citation type="submission" date="2006-06" db="EMBL/GenBank/DDBJ databases">
        <title>Complete sequence of chromosome of Mesorhizobium sp. BNC1.</title>
        <authorList>
            <consortium name="US DOE Joint Genome Institute"/>
            <person name="Copeland A."/>
            <person name="Lucas S."/>
            <person name="Lapidus A."/>
            <person name="Barry K."/>
            <person name="Detter J.C."/>
            <person name="Glavina del Rio T."/>
            <person name="Hammon N."/>
            <person name="Israni S."/>
            <person name="Dalin E."/>
            <person name="Tice H."/>
            <person name="Pitluck S."/>
            <person name="Chertkov O."/>
            <person name="Brettin T."/>
            <person name="Bruce D."/>
            <person name="Han C."/>
            <person name="Tapia R."/>
            <person name="Gilna P."/>
            <person name="Schmutz J."/>
            <person name="Larimer F."/>
            <person name="Land M."/>
            <person name="Hauser L."/>
            <person name="Kyrpides N."/>
            <person name="Mikhailova N."/>
            <person name="Richardson P."/>
        </authorList>
    </citation>
    <scope>NUCLEOTIDE SEQUENCE [LARGE SCALE GENOMIC DNA]</scope>
    <source>
        <strain>BNC1</strain>
    </source>
</reference>
<name>RPOB_CHESB</name>
<gene>
    <name evidence="1" type="primary">rpoB</name>
    <name type="ordered locus">Meso_1819</name>
</gene>
<keyword id="KW-0240">DNA-directed RNA polymerase</keyword>
<keyword id="KW-0548">Nucleotidyltransferase</keyword>
<keyword id="KW-0804">Transcription</keyword>
<keyword id="KW-0808">Transferase</keyword>
<organism>
    <name type="scientific">Chelativorans sp. (strain BNC1)</name>
    <dbReference type="NCBI Taxonomy" id="266779"/>
    <lineage>
        <taxon>Bacteria</taxon>
        <taxon>Pseudomonadati</taxon>
        <taxon>Pseudomonadota</taxon>
        <taxon>Alphaproteobacteria</taxon>
        <taxon>Hyphomicrobiales</taxon>
        <taxon>Phyllobacteriaceae</taxon>
        <taxon>Chelativorans</taxon>
    </lineage>
</organism>
<comment type="function">
    <text evidence="1">DNA-dependent RNA polymerase catalyzes the transcription of DNA into RNA using the four ribonucleoside triphosphates as substrates.</text>
</comment>
<comment type="catalytic activity">
    <reaction evidence="1">
        <text>RNA(n) + a ribonucleoside 5'-triphosphate = RNA(n+1) + diphosphate</text>
        <dbReference type="Rhea" id="RHEA:21248"/>
        <dbReference type="Rhea" id="RHEA-COMP:14527"/>
        <dbReference type="Rhea" id="RHEA-COMP:17342"/>
        <dbReference type="ChEBI" id="CHEBI:33019"/>
        <dbReference type="ChEBI" id="CHEBI:61557"/>
        <dbReference type="ChEBI" id="CHEBI:140395"/>
        <dbReference type="EC" id="2.7.7.6"/>
    </reaction>
</comment>
<comment type="subunit">
    <text evidence="1">The RNAP catalytic core consists of 2 alpha, 1 beta, 1 beta' and 1 omega subunit. When a sigma factor is associated with the core the holoenzyme is formed, which can initiate transcription.</text>
</comment>
<comment type="similarity">
    <text evidence="1">Belongs to the RNA polymerase beta chain family.</text>
</comment>
<protein>
    <recommendedName>
        <fullName evidence="1">DNA-directed RNA polymerase subunit beta</fullName>
        <shortName evidence="1">RNAP subunit beta</shortName>
        <ecNumber evidence="1">2.7.7.6</ecNumber>
    </recommendedName>
    <alternativeName>
        <fullName evidence="1">RNA polymerase subunit beta</fullName>
    </alternativeName>
    <alternativeName>
        <fullName evidence="1">Transcriptase subunit beta</fullName>
    </alternativeName>
</protein>
<evidence type="ECO:0000255" key="1">
    <source>
        <dbReference type="HAMAP-Rule" id="MF_01321"/>
    </source>
</evidence>
<proteinExistence type="inferred from homology"/>
<sequence>MAQTQTFNGRRRVRKFFGKIPEVAEMPNLIEVQKASYDQFLMVEEPQGGRPDEGLQAVFKSVFPISDFAGTAMLEFVKYEFEAPKFDTEECRQRDLTYAAPLKVTLRLIVFDIDEDTGSKSIKDIKEQDVYMGDMPLMTDNGTFIINGTERVIVSQMHRSPGVFFDHDKGKSHSSGKLLFAARVIPYRGSWLDIEFDAKDIVYARIDRRRKIPVTSLLMALGMDGEEILSTFYNKLTFIRDGDNWRVPFSAERFRGMKATADIIDADTGEVVLEAGKKMTARMARQLADKGLKAIRATEDDLLGNYLAEDIVNMKTGEIFLEAGDEIDEKTLKILLETAGNEVKFLDIDHVNIGGYIRNTLVADKNESRQDALFDIYRVMRPGEPPTLETAEAMFHSLFFDAERYDLSAVGRVKMNMRLELDCPDTVRVLRSEDMVAVVRTLVELRDGKGEIDDIDNLGNRRVRSVGELMENQYRLGLLRMERAIKERMSSIEIDTVMPQDLINAKPAAAAVREFFGSSQLSQFMDQTNPLSEITHKRRLSALGPGGLTRERAGFEVRDVHPTHYGRICPIETPEGPNIGLINSLATFARVNKYGFIETPYRKIVDGKVTEEVVYLSAMEEAKHYVAQANATIDENGGFADEFVVCRHAGEVIMAPRENVDLMDVSPKQLVSVAAALIPFLENDDANRALMGSNMQRQAVPLVRAEAPFVGTGMEPVVARDSGAAIAARRTGVVDQVDATRIVIRATEDVDASQSGVDIYRLQKFQRSNQNTCINQRPLVRVGDLINKGDIIADGPSTDLGDLALGRNVLVAFMPWNGYNYEDSILLSERIVRDDIFTSIHIEEFEVMARDTKLGPEEITRDIPNVSEEALKNLDEAGIVYIGAEVQPGDILVGKITPKGESPMTPEEKLLRAIFGEKASDVRDTSMRMPPGTYGTVVEVRVFNRHGVEKDERAMAIEREEIERLAKDRDDEQSILDRNVYARLSEMLIGKEAIAGPKGFKKGGALTKELLGEYPRSQWWQFAVEDEKLQSELEALRAQYDESKNALQQRFMDKVEKVQRGDEMPPGVMKMVKVFVAVKRKMQPGDKMAGRHGNKGVVSRIVPIEDMPFLEDGTHVDIVLNPLGVPSRMNVGQILETHLGWACAGMGRQIGELIDAYKEAGDIKPLRAKIESLIPDNDRNEPVRQYDDESVVRLSEQLRRGVSIATPVFDGAHESDINEMLEEAGLNSSGQVTLYDGRTGEEFDRKVTVGYIYMLKLHHLVDDKIHARSIGPYSLVTQQPLGGKAQFGGQRFGEMEVWALEAYGAAYTLQEMLTVKSDDVAGRTKVYEAIVRGDDTFEAGIPESFNVLVKEMRSLGLNVELENSSRFDTPPAQLPEAAE</sequence>
<dbReference type="EC" id="2.7.7.6" evidence="1"/>
<dbReference type="EMBL" id="CP000390">
    <property type="protein sequence ID" value="ABG63212.1"/>
    <property type="molecule type" value="Genomic_DNA"/>
</dbReference>
<dbReference type="SMR" id="Q11HB3"/>
<dbReference type="STRING" id="266779.Meso_1819"/>
<dbReference type="KEGG" id="mes:Meso_1819"/>
<dbReference type="eggNOG" id="COG0085">
    <property type="taxonomic scope" value="Bacteria"/>
</dbReference>
<dbReference type="HOGENOM" id="CLU_000524_4_3_5"/>
<dbReference type="OrthoDB" id="9803954at2"/>
<dbReference type="GO" id="GO:0000428">
    <property type="term" value="C:DNA-directed RNA polymerase complex"/>
    <property type="evidence" value="ECO:0007669"/>
    <property type="project" value="UniProtKB-KW"/>
</dbReference>
<dbReference type="GO" id="GO:0003677">
    <property type="term" value="F:DNA binding"/>
    <property type="evidence" value="ECO:0007669"/>
    <property type="project" value="UniProtKB-UniRule"/>
</dbReference>
<dbReference type="GO" id="GO:0003899">
    <property type="term" value="F:DNA-directed RNA polymerase activity"/>
    <property type="evidence" value="ECO:0007669"/>
    <property type="project" value="UniProtKB-UniRule"/>
</dbReference>
<dbReference type="GO" id="GO:0032549">
    <property type="term" value="F:ribonucleoside binding"/>
    <property type="evidence" value="ECO:0007669"/>
    <property type="project" value="InterPro"/>
</dbReference>
<dbReference type="GO" id="GO:0006351">
    <property type="term" value="P:DNA-templated transcription"/>
    <property type="evidence" value="ECO:0007669"/>
    <property type="project" value="UniProtKB-UniRule"/>
</dbReference>
<dbReference type="CDD" id="cd00653">
    <property type="entry name" value="RNA_pol_B_RPB2"/>
    <property type="match status" value="1"/>
</dbReference>
<dbReference type="FunFam" id="2.40.50.100:FF:000006">
    <property type="entry name" value="DNA-directed RNA polymerase subunit beta"/>
    <property type="match status" value="1"/>
</dbReference>
<dbReference type="FunFam" id="3.90.1800.10:FF:000001">
    <property type="entry name" value="DNA-directed RNA polymerase subunit beta"/>
    <property type="match status" value="1"/>
</dbReference>
<dbReference type="Gene3D" id="2.40.50.100">
    <property type="match status" value="1"/>
</dbReference>
<dbReference type="Gene3D" id="2.40.50.150">
    <property type="match status" value="1"/>
</dbReference>
<dbReference type="Gene3D" id="3.90.1100.10">
    <property type="match status" value="2"/>
</dbReference>
<dbReference type="Gene3D" id="2.30.150.10">
    <property type="entry name" value="DNA-directed RNA polymerase, beta subunit, external 1 domain"/>
    <property type="match status" value="1"/>
</dbReference>
<dbReference type="Gene3D" id="2.40.270.10">
    <property type="entry name" value="DNA-directed RNA polymerase, subunit 2, domain 6"/>
    <property type="match status" value="2"/>
</dbReference>
<dbReference type="Gene3D" id="3.90.1800.10">
    <property type="entry name" value="RNA polymerase alpha subunit dimerisation domain"/>
    <property type="match status" value="1"/>
</dbReference>
<dbReference type="Gene3D" id="3.90.1110.10">
    <property type="entry name" value="RNA polymerase Rpb2, domain 2"/>
    <property type="match status" value="2"/>
</dbReference>
<dbReference type="HAMAP" id="MF_01321">
    <property type="entry name" value="RNApol_bact_RpoB"/>
    <property type="match status" value="1"/>
</dbReference>
<dbReference type="InterPro" id="IPR042107">
    <property type="entry name" value="DNA-dir_RNA_pol_bsu_ext_1_sf"/>
</dbReference>
<dbReference type="InterPro" id="IPR019462">
    <property type="entry name" value="DNA-dir_RNA_pol_bsu_external_1"/>
</dbReference>
<dbReference type="InterPro" id="IPR015712">
    <property type="entry name" value="DNA-dir_RNA_pol_su2"/>
</dbReference>
<dbReference type="InterPro" id="IPR007120">
    <property type="entry name" value="DNA-dir_RNAP_su2_dom"/>
</dbReference>
<dbReference type="InterPro" id="IPR037033">
    <property type="entry name" value="DNA-dir_RNAP_su2_hyb_sf"/>
</dbReference>
<dbReference type="InterPro" id="IPR010243">
    <property type="entry name" value="RNA_pol_bsu_bac"/>
</dbReference>
<dbReference type="InterPro" id="IPR007121">
    <property type="entry name" value="RNA_pol_bsu_CS"/>
</dbReference>
<dbReference type="InterPro" id="IPR007644">
    <property type="entry name" value="RNA_pol_bsu_protrusion"/>
</dbReference>
<dbReference type="InterPro" id="IPR007642">
    <property type="entry name" value="RNA_pol_Rpb2_2"/>
</dbReference>
<dbReference type="InterPro" id="IPR037034">
    <property type="entry name" value="RNA_pol_Rpb2_2_sf"/>
</dbReference>
<dbReference type="InterPro" id="IPR007645">
    <property type="entry name" value="RNA_pol_Rpb2_3"/>
</dbReference>
<dbReference type="InterPro" id="IPR007641">
    <property type="entry name" value="RNA_pol_Rpb2_7"/>
</dbReference>
<dbReference type="InterPro" id="IPR014724">
    <property type="entry name" value="RNA_pol_RPB2_OB-fold"/>
</dbReference>
<dbReference type="NCBIfam" id="NF001616">
    <property type="entry name" value="PRK00405.1"/>
    <property type="match status" value="1"/>
</dbReference>
<dbReference type="NCBIfam" id="TIGR02013">
    <property type="entry name" value="rpoB"/>
    <property type="match status" value="1"/>
</dbReference>
<dbReference type="PANTHER" id="PTHR20856">
    <property type="entry name" value="DNA-DIRECTED RNA POLYMERASE I SUBUNIT 2"/>
    <property type="match status" value="1"/>
</dbReference>
<dbReference type="Pfam" id="PF04563">
    <property type="entry name" value="RNA_pol_Rpb2_1"/>
    <property type="match status" value="1"/>
</dbReference>
<dbReference type="Pfam" id="PF04561">
    <property type="entry name" value="RNA_pol_Rpb2_2"/>
    <property type="match status" value="2"/>
</dbReference>
<dbReference type="Pfam" id="PF04565">
    <property type="entry name" value="RNA_pol_Rpb2_3"/>
    <property type="match status" value="1"/>
</dbReference>
<dbReference type="Pfam" id="PF10385">
    <property type="entry name" value="RNA_pol_Rpb2_45"/>
    <property type="match status" value="1"/>
</dbReference>
<dbReference type="Pfam" id="PF00562">
    <property type="entry name" value="RNA_pol_Rpb2_6"/>
    <property type="match status" value="1"/>
</dbReference>
<dbReference type="Pfam" id="PF04560">
    <property type="entry name" value="RNA_pol_Rpb2_7"/>
    <property type="match status" value="1"/>
</dbReference>
<dbReference type="SUPFAM" id="SSF64484">
    <property type="entry name" value="beta and beta-prime subunits of DNA dependent RNA-polymerase"/>
    <property type="match status" value="1"/>
</dbReference>
<dbReference type="PROSITE" id="PS01166">
    <property type="entry name" value="RNA_POL_BETA"/>
    <property type="match status" value="1"/>
</dbReference>